<protein>
    <recommendedName>
        <fullName>Tryptophan synthase beta chain</fullName>
        <ecNumber>4.2.1.20</ecNumber>
    </recommendedName>
</protein>
<evidence type="ECO:0000250" key="1"/>
<evidence type="ECO:0000305" key="2"/>
<keyword id="KW-0028">Amino-acid biosynthesis</keyword>
<keyword id="KW-0057">Aromatic amino acid biosynthesis</keyword>
<keyword id="KW-0456">Lyase</keyword>
<keyword id="KW-0663">Pyridoxal phosphate</keyword>
<keyword id="KW-1185">Reference proteome</keyword>
<keyword id="KW-0822">Tryptophan biosynthesis</keyword>
<proteinExistence type="inferred from homology"/>
<reference key="1">
    <citation type="journal article" date="1997" name="Nature">
        <title>The complete genome sequence of the gastric pathogen Helicobacter pylori.</title>
        <authorList>
            <person name="Tomb J.-F."/>
            <person name="White O."/>
            <person name="Kerlavage A.R."/>
            <person name="Clayton R.A."/>
            <person name="Sutton G.G."/>
            <person name="Fleischmann R.D."/>
            <person name="Ketchum K.A."/>
            <person name="Klenk H.-P."/>
            <person name="Gill S.R."/>
            <person name="Dougherty B.A."/>
            <person name="Nelson K.E."/>
            <person name="Quackenbush J."/>
            <person name="Zhou L."/>
            <person name="Kirkness E.F."/>
            <person name="Peterson S.N."/>
            <person name="Loftus B.J."/>
            <person name="Richardson D.L."/>
            <person name="Dodson R.J."/>
            <person name="Khalak H.G."/>
            <person name="Glodek A."/>
            <person name="McKenney K."/>
            <person name="FitzGerald L.M."/>
            <person name="Lee N."/>
            <person name="Adams M.D."/>
            <person name="Hickey E.K."/>
            <person name="Berg D.E."/>
            <person name="Gocayne J.D."/>
            <person name="Utterback T.R."/>
            <person name="Peterson J.D."/>
            <person name="Kelley J.M."/>
            <person name="Cotton M.D."/>
            <person name="Weidman J.F."/>
            <person name="Fujii C."/>
            <person name="Bowman C."/>
            <person name="Watthey L."/>
            <person name="Wallin E."/>
            <person name="Hayes W.S."/>
            <person name="Borodovsky M."/>
            <person name="Karp P.D."/>
            <person name="Smith H.O."/>
            <person name="Fraser C.M."/>
            <person name="Venter J.C."/>
        </authorList>
    </citation>
    <scope>NUCLEOTIDE SEQUENCE [LARGE SCALE GENOMIC DNA]</scope>
    <source>
        <strain>ATCC 700392 / 26695</strain>
    </source>
</reference>
<organism>
    <name type="scientific">Helicobacter pylori (strain ATCC 700392 / 26695)</name>
    <name type="common">Campylobacter pylori</name>
    <dbReference type="NCBI Taxonomy" id="85962"/>
    <lineage>
        <taxon>Bacteria</taxon>
        <taxon>Pseudomonadati</taxon>
        <taxon>Campylobacterota</taxon>
        <taxon>Epsilonproteobacteria</taxon>
        <taxon>Campylobacterales</taxon>
        <taxon>Helicobacteraceae</taxon>
        <taxon>Helicobacter</taxon>
    </lineage>
</organism>
<gene>
    <name type="primary">trpB</name>
    <name type="ordered locus">HP_1278</name>
</gene>
<sequence length="393" mass="42684">MNKKAYFGEFGGSFVSELLVPALRELEQAFDACLKDEKFQKEYFRLLKDFVGRPSPLTLCQNIVSNPKVKLYLKREDLIHGGAHKTNQALGQALLAKKMGKTRIIAETGAGQHGVATAIACALLNLKCVVFMGSKDIKRQEMNVFRMHLLGAEVREVNSGSATLKDAVNEALRDWASSYKDTHYLLGTAAGPHPYPTMVKTFQKMIGDEVKSQILEKENRLPDYVIACVGGGSNAIGIFSAFLNDKEVKLIGVEPAGLGLETNKHGATLNKGRVGILHGNKTYLLQDDEGQIAESHSISAGLDYPGVGPEHSYLKESGRAVYESASDAEALEAFKLLCQKEGIIPALESSHALAYALKLAQKCEEESIIVVNLSGRGDKDLSTVYNALKGGLK</sequence>
<feature type="chain" id="PRO_0000098955" description="Tryptophan synthase beta chain">
    <location>
        <begin position="1"/>
        <end position="393"/>
    </location>
</feature>
<feature type="modified residue" description="N6-(pyridoxal phosphate)lysine" evidence="1">
    <location>
        <position position="85"/>
    </location>
</feature>
<name>TRPB_HELPY</name>
<accession>P56142</accession>
<dbReference type="EC" id="4.2.1.20"/>
<dbReference type="EMBL" id="AE000511">
    <property type="protein sequence ID" value="AAD08323.1"/>
    <property type="molecule type" value="Genomic_DNA"/>
</dbReference>
<dbReference type="PIR" id="F64679">
    <property type="entry name" value="F64679"/>
</dbReference>
<dbReference type="RefSeq" id="NP_208070.1">
    <property type="nucleotide sequence ID" value="NC_000915.1"/>
</dbReference>
<dbReference type="RefSeq" id="WP_001034280.1">
    <property type="nucleotide sequence ID" value="NC_018939.1"/>
</dbReference>
<dbReference type="SMR" id="P56142"/>
<dbReference type="DIP" id="DIP-3612N"/>
<dbReference type="FunCoup" id="P56142">
    <property type="interactions" value="368"/>
</dbReference>
<dbReference type="IntAct" id="P56142">
    <property type="interactions" value="3"/>
</dbReference>
<dbReference type="MINT" id="P56142"/>
<dbReference type="STRING" id="85962.HP_1278"/>
<dbReference type="PaxDb" id="85962-C694_06605"/>
<dbReference type="EnsemblBacteria" id="AAD08323">
    <property type="protein sequence ID" value="AAD08323"/>
    <property type="gene ID" value="HP_1278"/>
</dbReference>
<dbReference type="KEGG" id="heo:C694_06605"/>
<dbReference type="KEGG" id="hpy:HP_1278"/>
<dbReference type="PATRIC" id="fig|85962.47.peg.1371"/>
<dbReference type="eggNOG" id="COG0133">
    <property type="taxonomic scope" value="Bacteria"/>
</dbReference>
<dbReference type="InParanoid" id="P56142"/>
<dbReference type="OrthoDB" id="9766131at2"/>
<dbReference type="PhylomeDB" id="P56142"/>
<dbReference type="UniPathway" id="UPA00035">
    <property type="reaction ID" value="UER00044"/>
</dbReference>
<dbReference type="Proteomes" id="UP000000429">
    <property type="component" value="Chromosome"/>
</dbReference>
<dbReference type="GO" id="GO:0005737">
    <property type="term" value="C:cytoplasm"/>
    <property type="evidence" value="ECO:0000318"/>
    <property type="project" value="GO_Central"/>
</dbReference>
<dbReference type="GO" id="GO:0004834">
    <property type="term" value="F:tryptophan synthase activity"/>
    <property type="evidence" value="ECO:0007669"/>
    <property type="project" value="UniProtKB-UniRule"/>
</dbReference>
<dbReference type="GO" id="GO:0000162">
    <property type="term" value="P:L-tryptophan biosynthetic process"/>
    <property type="evidence" value="ECO:0000318"/>
    <property type="project" value="GO_Central"/>
</dbReference>
<dbReference type="CDD" id="cd06446">
    <property type="entry name" value="Trp-synth_B"/>
    <property type="match status" value="1"/>
</dbReference>
<dbReference type="FunFam" id="3.40.50.1100:FF:000001">
    <property type="entry name" value="Tryptophan synthase beta chain"/>
    <property type="match status" value="1"/>
</dbReference>
<dbReference type="FunFam" id="3.40.50.1100:FF:000004">
    <property type="entry name" value="Tryptophan synthase beta chain"/>
    <property type="match status" value="1"/>
</dbReference>
<dbReference type="Gene3D" id="3.40.50.1100">
    <property type="match status" value="2"/>
</dbReference>
<dbReference type="HAMAP" id="MF_00133">
    <property type="entry name" value="Trp_synth_beta"/>
    <property type="match status" value="1"/>
</dbReference>
<dbReference type="InterPro" id="IPR006653">
    <property type="entry name" value="Trp_synth_b_CS"/>
</dbReference>
<dbReference type="InterPro" id="IPR006654">
    <property type="entry name" value="Trp_synth_beta"/>
</dbReference>
<dbReference type="InterPro" id="IPR023026">
    <property type="entry name" value="Trp_synth_beta/beta-like"/>
</dbReference>
<dbReference type="InterPro" id="IPR001926">
    <property type="entry name" value="TrpB-like_PALP"/>
</dbReference>
<dbReference type="InterPro" id="IPR036052">
    <property type="entry name" value="TrpB-like_PALP_sf"/>
</dbReference>
<dbReference type="NCBIfam" id="TIGR00263">
    <property type="entry name" value="trpB"/>
    <property type="match status" value="1"/>
</dbReference>
<dbReference type="PANTHER" id="PTHR48077:SF3">
    <property type="entry name" value="TRYPTOPHAN SYNTHASE"/>
    <property type="match status" value="1"/>
</dbReference>
<dbReference type="PANTHER" id="PTHR48077">
    <property type="entry name" value="TRYPTOPHAN SYNTHASE-RELATED"/>
    <property type="match status" value="1"/>
</dbReference>
<dbReference type="Pfam" id="PF00291">
    <property type="entry name" value="PALP"/>
    <property type="match status" value="1"/>
</dbReference>
<dbReference type="PIRSF" id="PIRSF001413">
    <property type="entry name" value="Trp_syn_beta"/>
    <property type="match status" value="1"/>
</dbReference>
<dbReference type="SUPFAM" id="SSF53686">
    <property type="entry name" value="Tryptophan synthase beta subunit-like PLP-dependent enzymes"/>
    <property type="match status" value="1"/>
</dbReference>
<dbReference type="PROSITE" id="PS00168">
    <property type="entry name" value="TRP_SYNTHASE_BETA"/>
    <property type="match status" value="1"/>
</dbReference>
<comment type="function">
    <text evidence="1">The beta subunit is responsible for the synthesis of L-tryptophan from indole and L-serine.</text>
</comment>
<comment type="catalytic activity">
    <reaction>
        <text>(1S,2R)-1-C-(indol-3-yl)glycerol 3-phosphate + L-serine = D-glyceraldehyde 3-phosphate + L-tryptophan + H2O</text>
        <dbReference type="Rhea" id="RHEA:10532"/>
        <dbReference type="ChEBI" id="CHEBI:15377"/>
        <dbReference type="ChEBI" id="CHEBI:33384"/>
        <dbReference type="ChEBI" id="CHEBI:57912"/>
        <dbReference type="ChEBI" id="CHEBI:58866"/>
        <dbReference type="ChEBI" id="CHEBI:59776"/>
        <dbReference type="EC" id="4.2.1.20"/>
    </reaction>
</comment>
<comment type="cofactor">
    <cofactor evidence="1">
        <name>pyridoxal 5'-phosphate</name>
        <dbReference type="ChEBI" id="CHEBI:597326"/>
    </cofactor>
</comment>
<comment type="pathway">
    <text>Amino-acid biosynthesis; L-tryptophan biosynthesis; L-tryptophan from chorismate: step 5/5.</text>
</comment>
<comment type="subunit">
    <text evidence="1">Tetramer of two alpha and two beta chains.</text>
</comment>
<comment type="similarity">
    <text evidence="2">Belongs to the TrpB family.</text>
</comment>